<keyword id="KW-0030">Aminoacyl-tRNA synthetase</keyword>
<keyword id="KW-0067">ATP-binding</keyword>
<keyword id="KW-0963">Cytoplasm</keyword>
<keyword id="KW-0436">Ligase</keyword>
<keyword id="KW-0479">Metal-binding</keyword>
<keyword id="KW-0547">Nucleotide-binding</keyword>
<keyword id="KW-0648">Protein biosynthesis</keyword>
<keyword id="KW-1185">Reference proteome</keyword>
<keyword id="KW-0694">RNA-binding</keyword>
<keyword id="KW-0820">tRNA-binding</keyword>
<keyword id="KW-0862">Zinc</keyword>
<gene>
    <name evidence="1" type="primary">alaS</name>
    <name type="ordered locus">PTH_1060/PTH_1061</name>
</gene>
<feature type="chain" id="PRO_0000347718" description="Alanine--tRNA ligase">
    <location>
        <begin position="1"/>
        <end position="877"/>
    </location>
</feature>
<feature type="binding site" evidence="1">
    <location>
        <position position="564"/>
    </location>
    <ligand>
        <name>Zn(2+)</name>
        <dbReference type="ChEBI" id="CHEBI:29105"/>
    </ligand>
</feature>
<feature type="binding site" evidence="1">
    <location>
        <position position="568"/>
    </location>
    <ligand>
        <name>Zn(2+)</name>
        <dbReference type="ChEBI" id="CHEBI:29105"/>
    </ligand>
</feature>
<feature type="binding site" evidence="1">
    <location>
        <position position="666"/>
    </location>
    <ligand>
        <name>Zn(2+)</name>
        <dbReference type="ChEBI" id="CHEBI:29105"/>
    </ligand>
</feature>
<feature type="binding site" evidence="1">
    <location>
        <position position="670"/>
    </location>
    <ligand>
        <name>Zn(2+)</name>
        <dbReference type="ChEBI" id="CHEBI:29105"/>
    </ligand>
</feature>
<reference key="1">
    <citation type="journal article" date="2008" name="Genome Res.">
        <title>The genome of Pelotomaculum thermopropionicum reveals niche-associated evolution in anaerobic microbiota.</title>
        <authorList>
            <person name="Kosaka T."/>
            <person name="Kato S."/>
            <person name="Shimoyama T."/>
            <person name="Ishii S."/>
            <person name="Abe T."/>
            <person name="Watanabe K."/>
        </authorList>
    </citation>
    <scope>NUCLEOTIDE SEQUENCE [LARGE SCALE GENOMIC DNA]</scope>
    <source>
        <strain>DSM 13744 / JCM 10971 / SI</strain>
    </source>
</reference>
<dbReference type="EC" id="6.1.1.7" evidence="1"/>
<dbReference type="EMBL" id="AP009389">
    <property type="protein sequence ID" value="BAF59241.1"/>
    <property type="status" value="ALT_FRAME"/>
    <property type="molecule type" value="Genomic_DNA"/>
</dbReference>
<dbReference type="EMBL" id="AP009389">
    <property type="protein sequence ID" value="BAF59242.1"/>
    <property type="status" value="ALT_FRAME"/>
    <property type="molecule type" value="Genomic_DNA"/>
</dbReference>
<dbReference type="SMR" id="A5D3F4"/>
<dbReference type="STRING" id="370438.PTH_1060"/>
<dbReference type="KEGG" id="pth:PTH_1060"/>
<dbReference type="KEGG" id="pth:PTH_1061"/>
<dbReference type="eggNOG" id="COG0013">
    <property type="taxonomic scope" value="Bacteria"/>
</dbReference>
<dbReference type="HOGENOM" id="CLU_004485_0_3_9"/>
<dbReference type="Proteomes" id="UP000006556">
    <property type="component" value="Chromosome"/>
</dbReference>
<dbReference type="GO" id="GO:0005829">
    <property type="term" value="C:cytosol"/>
    <property type="evidence" value="ECO:0007669"/>
    <property type="project" value="TreeGrafter"/>
</dbReference>
<dbReference type="GO" id="GO:0004813">
    <property type="term" value="F:alanine-tRNA ligase activity"/>
    <property type="evidence" value="ECO:0007669"/>
    <property type="project" value="UniProtKB-UniRule"/>
</dbReference>
<dbReference type="GO" id="GO:0002161">
    <property type="term" value="F:aminoacyl-tRNA deacylase activity"/>
    <property type="evidence" value="ECO:0007669"/>
    <property type="project" value="TreeGrafter"/>
</dbReference>
<dbReference type="GO" id="GO:0005524">
    <property type="term" value="F:ATP binding"/>
    <property type="evidence" value="ECO:0007669"/>
    <property type="project" value="UniProtKB-UniRule"/>
</dbReference>
<dbReference type="GO" id="GO:0140096">
    <property type="term" value="F:catalytic activity, acting on a protein"/>
    <property type="evidence" value="ECO:0007669"/>
    <property type="project" value="UniProtKB-ARBA"/>
</dbReference>
<dbReference type="GO" id="GO:0016740">
    <property type="term" value="F:transferase activity"/>
    <property type="evidence" value="ECO:0007669"/>
    <property type="project" value="UniProtKB-ARBA"/>
</dbReference>
<dbReference type="GO" id="GO:0000049">
    <property type="term" value="F:tRNA binding"/>
    <property type="evidence" value="ECO:0007669"/>
    <property type="project" value="UniProtKB-KW"/>
</dbReference>
<dbReference type="GO" id="GO:0008270">
    <property type="term" value="F:zinc ion binding"/>
    <property type="evidence" value="ECO:0007669"/>
    <property type="project" value="UniProtKB-UniRule"/>
</dbReference>
<dbReference type="GO" id="GO:0006419">
    <property type="term" value="P:alanyl-tRNA aminoacylation"/>
    <property type="evidence" value="ECO:0007669"/>
    <property type="project" value="UniProtKB-UniRule"/>
</dbReference>
<dbReference type="CDD" id="cd00673">
    <property type="entry name" value="AlaRS_core"/>
    <property type="match status" value="1"/>
</dbReference>
<dbReference type="FunFam" id="2.40.30.130:FF:000001">
    <property type="entry name" value="Alanine--tRNA ligase"/>
    <property type="match status" value="1"/>
</dbReference>
<dbReference type="FunFam" id="3.10.310.40:FF:000001">
    <property type="entry name" value="Alanine--tRNA ligase"/>
    <property type="match status" value="1"/>
</dbReference>
<dbReference type="FunFam" id="3.30.54.20:FF:000001">
    <property type="entry name" value="Alanine--tRNA ligase"/>
    <property type="match status" value="1"/>
</dbReference>
<dbReference type="FunFam" id="3.30.930.10:FF:000004">
    <property type="entry name" value="Alanine--tRNA ligase"/>
    <property type="match status" value="1"/>
</dbReference>
<dbReference type="FunFam" id="3.30.980.10:FF:000004">
    <property type="entry name" value="Alanine--tRNA ligase, cytoplasmic"/>
    <property type="match status" value="1"/>
</dbReference>
<dbReference type="Gene3D" id="2.40.30.130">
    <property type="match status" value="1"/>
</dbReference>
<dbReference type="Gene3D" id="3.10.310.40">
    <property type="match status" value="1"/>
</dbReference>
<dbReference type="Gene3D" id="3.30.54.20">
    <property type="match status" value="1"/>
</dbReference>
<dbReference type="Gene3D" id="6.10.250.550">
    <property type="match status" value="1"/>
</dbReference>
<dbReference type="Gene3D" id="3.30.930.10">
    <property type="entry name" value="Bira Bifunctional Protein, Domain 2"/>
    <property type="match status" value="1"/>
</dbReference>
<dbReference type="Gene3D" id="3.30.980.10">
    <property type="entry name" value="Threonyl-trna Synthetase, Chain A, domain 2"/>
    <property type="match status" value="1"/>
</dbReference>
<dbReference type="HAMAP" id="MF_00036_B">
    <property type="entry name" value="Ala_tRNA_synth_B"/>
    <property type="match status" value="1"/>
</dbReference>
<dbReference type="InterPro" id="IPR045864">
    <property type="entry name" value="aa-tRNA-synth_II/BPL/LPL"/>
</dbReference>
<dbReference type="InterPro" id="IPR002318">
    <property type="entry name" value="Ala-tRNA-lgiase_IIc"/>
</dbReference>
<dbReference type="InterPro" id="IPR018162">
    <property type="entry name" value="Ala-tRNA-ligase_IIc_anticod-bd"/>
</dbReference>
<dbReference type="InterPro" id="IPR018165">
    <property type="entry name" value="Ala-tRNA-synth_IIc_core"/>
</dbReference>
<dbReference type="InterPro" id="IPR018164">
    <property type="entry name" value="Ala-tRNA-synth_IIc_N"/>
</dbReference>
<dbReference type="InterPro" id="IPR050058">
    <property type="entry name" value="Ala-tRNA_ligase"/>
</dbReference>
<dbReference type="InterPro" id="IPR023033">
    <property type="entry name" value="Ala_tRNA_ligase_euk/bac"/>
</dbReference>
<dbReference type="InterPro" id="IPR003156">
    <property type="entry name" value="DHHA1_dom"/>
</dbReference>
<dbReference type="InterPro" id="IPR018163">
    <property type="entry name" value="Thr/Ala-tRNA-synth_IIc_edit"/>
</dbReference>
<dbReference type="InterPro" id="IPR009000">
    <property type="entry name" value="Transl_B-barrel_sf"/>
</dbReference>
<dbReference type="InterPro" id="IPR012947">
    <property type="entry name" value="tRNA_SAD"/>
</dbReference>
<dbReference type="NCBIfam" id="TIGR00344">
    <property type="entry name" value="alaS"/>
    <property type="match status" value="1"/>
</dbReference>
<dbReference type="PANTHER" id="PTHR11777:SF9">
    <property type="entry name" value="ALANINE--TRNA LIGASE, CYTOPLASMIC"/>
    <property type="match status" value="1"/>
</dbReference>
<dbReference type="PANTHER" id="PTHR11777">
    <property type="entry name" value="ALANYL-TRNA SYNTHETASE"/>
    <property type="match status" value="1"/>
</dbReference>
<dbReference type="Pfam" id="PF02272">
    <property type="entry name" value="DHHA1"/>
    <property type="match status" value="1"/>
</dbReference>
<dbReference type="Pfam" id="PF01411">
    <property type="entry name" value="tRNA-synt_2c"/>
    <property type="match status" value="1"/>
</dbReference>
<dbReference type="Pfam" id="PF07973">
    <property type="entry name" value="tRNA_SAD"/>
    <property type="match status" value="1"/>
</dbReference>
<dbReference type="PRINTS" id="PR00980">
    <property type="entry name" value="TRNASYNTHALA"/>
</dbReference>
<dbReference type="SMART" id="SM00863">
    <property type="entry name" value="tRNA_SAD"/>
    <property type="match status" value="1"/>
</dbReference>
<dbReference type="SUPFAM" id="SSF55681">
    <property type="entry name" value="Class II aaRS and biotin synthetases"/>
    <property type="match status" value="1"/>
</dbReference>
<dbReference type="SUPFAM" id="SSF101353">
    <property type="entry name" value="Putative anticodon-binding domain of alanyl-tRNA synthetase (AlaRS)"/>
    <property type="match status" value="1"/>
</dbReference>
<dbReference type="SUPFAM" id="SSF55186">
    <property type="entry name" value="ThrRS/AlaRS common domain"/>
    <property type="match status" value="1"/>
</dbReference>
<dbReference type="SUPFAM" id="SSF50447">
    <property type="entry name" value="Translation proteins"/>
    <property type="match status" value="1"/>
</dbReference>
<dbReference type="PROSITE" id="PS50860">
    <property type="entry name" value="AA_TRNA_LIGASE_II_ALA"/>
    <property type="match status" value="1"/>
</dbReference>
<organism>
    <name type="scientific">Pelotomaculum thermopropionicum (strain DSM 13744 / JCM 10971 / SI)</name>
    <dbReference type="NCBI Taxonomy" id="370438"/>
    <lineage>
        <taxon>Bacteria</taxon>
        <taxon>Bacillati</taxon>
        <taxon>Bacillota</taxon>
        <taxon>Clostridia</taxon>
        <taxon>Eubacteriales</taxon>
        <taxon>Desulfotomaculaceae</taxon>
        <taxon>Pelotomaculum</taxon>
    </lineage>
</organism>
<comment type="function">
    <text evidence="1">Catalyzes the attachment of alanine to tRNA(Ala) in a two-step reaction: alanine is first activated by ATP to form Ala-AMP and then transferred to the acceptor end of tRNA(Ala). Also edits incorrectly charged Ser-tRNA(Ala) and Gly-tRNA(Ala) via its editing domain.</text>
</comment>
<comment type="catalytic activity">
    <reaction evidence="1">
        <text>tRNA(Ala) + L-alanine + ATP = L-alanyl-tRNA(Ala) + AMP + diphosphate</text>
        <dbReference type="Rhea" id="RHEA:12540"/>
        <dbReference type="Rhea" id="RHEA-COMP:9657"/>
        <dbReference type="Rhea" id="RHEA-COMP:9923"/>
        <dbReference type="ChEBI" id="CHEBI:30616"/>
        <dbReference type="ChEBI" id="CHEBI:33019"/>
        <dbReference type="ChEBI" id="CHEBI:57972"/>
        <dbReference type="ChEBI" id="CHEBI:78442"/>
        <dbReference type="ChEBI" id="CHEBI:78497"/>
        <dbReference type="ChEBI" id="CHEBI:456215"/>
        <dbReference type="EC" id="6.1.1.7"/>
    </reaction>
</comment>
<comment type="cofactor">
    <cofactor evidence="1">
        <name>Zn(2+)</name>
        <dbReference type="ChEBI" id="CHEBI:29105"/>
    </cofactor>
    <text evidence="1">Binds 1 zinc ion per subunit.</text>
</comment>
<comment type="subcellular location">
    <subcellularLocation>
        <location evidence="1">Cytoplasm</location>
    </subcellularLocation>
</comment>
<comment type="domain">
    <text evidence="1">Consists of three domains; the N-terminal catalytic domain, the editing domain and the C-terminal C-Ala domain. The editing domain removes incorrectly charged amino acids, while the C-Ala domain, along with tRNA(Ala), serves as a bridge to cooperatively bring together the editing and aminoacylation centers thus stimulating deacylation of misacylated tRNAs.</text>
</comment>
<comment type="similarity">
    <text evidence="1">Belongs to the class-II aminoacyl-tRNA synthetase family.</text>
</comment>
<comment type="sequence caution" evidence="2">
    <conflict type="frameshift">
        <sequence resource="EMBL-CDS" id="BAF59241"/>
    </conflict>
</comment>
<comment type="sequence caution" evidence="2">
    <conflict type="frameshift">
        <sequence resource="EMBL-CDS" id="BAF59242"/>
    </conflict>
</comment>
<protein>
    <recommendedName>
        <fullName evidence="1">Alanine--tRNA ligase</fullName>
        <ecNumber evidence="1">6.1.1.7</ecNumber>
    </recommendedName>
    <alternativeName>
        <fullName evidence="1">Alanyl-tRNA synthetase</fullName>
        <shortName evidence="1">AlaRS</shortName>
    </alternativeName>
</protein>
<proteinExistence type="inferred from homology"/>
<evidence type="ECO:0000255" key="1">
    <source>
        <dbReference type="HAMAP-Rule" id="MF_00036"/>
    </source>
</evidence>
<evidence type="ECO:0000305" key="2"/>
<sequence>MTGNEIRESYLKFFEKKGHKILPSASLIPLNDPSILWTAAGMVPFKPFFTGAAKPEYTRVTTCQKCIRTPDIESVGKTARHHTFFEMLGNFSFGDYFKESAIPWAWEFVTEHLRLPADKLWISIFLDDDEAFEIWNKTVGVPAGRIVRMGKDTNFWEIGVGPCGPCSEIYVDLGAERGCGSPECKVGCDCDRFLEIWNLVFIQFFKDEEGNYTPLTSKGIDTGFGLERVASVMQGVPTNFDTDLFREIMDFTAGLFGLKYGVDGRVDVALKVIADHCRAITFAVADGALPSNEGRGYVIRRLLRRAVRFGRLLGIEDPFLHEVSGAVVRQMGRVYPELVTQREHVFRVIRREEERFGETLAQGTEMLNRLIAEARQAGSAVVSGEDAFRLYDTYGFPLELTQEMAGEQGLTVDTDGFGRAMEEQRQRARSARQETDYISGRDAMFKKMREEVGETVFVGYDALEATGRVLRIVQGGKRLESAQAGEEVEFILDVTPFYAESGGQVSDRGKVTAADLEVEIHEVTKPVENLFVHRGKVVAGILKEHDTVTARVDPARRAATCRNHSATHLLHKALKEVLGGHVNQAGSLVEPERLRFDFTHYAAATPEELQKVEELVNRMVLSALPVEAFETSLAEARKMGAAALFGEKYGERVRVVKMGDFSLELCGGTHLRNTAEVGLFKLLGESSVGAGLRRIEAVTGEGALSYVKAKEEQLAEIARLVKAAPHEAVRRVEGLLQTVRDLEAENEALQARLARYQVQDLMDRLREVKGVKVLAGQAAAPDMDSLRGMVDLLRDRVGSGVIVLGSAGENRVNLVAAVTKDLVEKGLHAGKLVKELAPVVGGGGGGRPEMAQAGGKDPSRLKEALEKTYKAVESQLK</sequence>
<accession>A5D3F4</accession>
<accession>A5D3F5</accession>
<name>SYA_PELTS</name>